<comment type="function">
    <text evidence="1">This is one of the proteins that binds to the 5S RNA in the ribosome where it forms part of the central protuberance.</text>
</comment>
<comment type="subunit">
    <text evidence="1">Part of the 50S ribosomal subunit; part of the 5S rRNA/L5/L18/L25 subcomplex. Contacts the 5S rRNA. Binds to the 5S rRNA independently of L5 and L18.</text>
</comment>
<comment type="similarity">
    <text evidence="1">Belongs to the bacterial ribosomal protein bL25 family.</text>
</comment>
<gene>
    <name evidence="1" type="primary">rplY</name>
    <name type="ordered locus">BUsg_131</name>
</gene>
<dbReference type="EMBL" id="AE013218">
    <property type="protein sequence ID" value="AAM67699.1"/>
    <property type="molecule type" value="Genomic_DNA"/>
</dbReference>
<dbReference type="RefSeq" id="WP_011053666.1">
    <property type="nucleotide sequence ID" value="NC_004061.1"/>
</dbReference>
<dbReference type="SMR" id="Q8KA03"/>
<dbReference type="STRING" id="198804.BUsg_131"/>
<dbReference type="GeneID" id="93003601"/>
<dbReference type="KEGG" id="bas:BUsg_131"/>
<dbReference type="eggNOG" id="COG1825">
    <property type="taxonomic scope" value="Bacteria"/>
</dbReference>
<dbReference type="HOGENOM" id="CLU_137946_0_0_6"/>
<dbReference type="Proteomes" id="UP000000416">
    <property type="component" value="Chromosome"/>
</dbReference>
<dbReference type="GO" id="GO:0022625">
    <property type="term" value="C:cytosolic large ribosomal subunit"/>
    <property type="evidence" value="ECO:0007669"/>
    <property type="project" value="TreeGrafter"/>
</dbReference>
<dbReference type="GO" id="GO:0008097">
    <property type="term" value="F:5S rRNA binding"/>
    <property type="evidence" value="ECO:0007669"/>
    <property type="project" value="InterPro"/>
</dbReference>
<dbReference type="GO" id="GO:0003735">
    <property type="term" value="F:structural constituent of ribosome"/>
    <property type="evidence" value="ECO:0007669"/>
    <property type="project" value="InterPro"/>
</dbReference>
<dbReference type="GO" id="GO:0006412">
    <property type="term" value="P:translation"/>
    <property type="evidence" value="ECO:0007669"/>
    <property type="project" value="UniProtKB-UniRule"/>
</dbReference>
<dbReference type="CDD" id="cd00495">
    <property type="entry name" value="Ribosomal_L25_TL5_CTC"/>
    <property type="match status" value="1"/>
</dbReference>
<dbReference type="FunFam" id="2.40.240.10:FF:000002">
    <property type="entry name" value="50S ribosomal protein L25"/>
    <property type="match status" value="1"/>
</dbReference>
<dbReference type="Gene3D" id="2.40.240.10">
    <property type="entry name" value="Ribosomal Protein L25, Chain P"/>
    <property type="match status" value="1"/>
</dbReference>
<dbReference type="HAMAP" id="MF_01336">
    <property type="entry name" value="Ribosomal_bL25"/>
    <property type="match status" value="1"/>
</dbReference>
<dbReference type="InterPro" id="IPR020056">
    <property type="entry name" value="Rbsml_bL25/Gln-tRNA_synth_N"/>
</dbReference>
<dbReference type="InterPro" id="IPR011035">
    <property type="entry name" value="Ribosomal_bL25/Gln-tRNA_synth"/>
</dbReference>
<dbReference type="InterPro" id="IPR020055">
    <property type="entry name" value="Ribosomal_bL25_short"/>
</dbReference>
<dbReference type="InterPro" id="IPR029751">
    <property type="entry name" value="Ribosomal_L25_dom"/>
</dbReference>
<dbReference type="InterPro" id="IPR020930">
    <property type="entry name" value="Ribosomal_uL5_bac-type"/>
</dbReference>
<dbReference type="NCBIfam" id="NF004612">
    <property type="entry name" value="PRK05943.1"/>
    <property type="match status" value="1"/>
</dbReference>
<dbReference type="PANTHER" id="PTHR33284">
    <property type="entry name" value="RIBOSOMAL PROTEIN L25/GLN-TRNA SYNTHETASE, ANTI-CODON-BINDING DOMAIN-CONTAINING PROTEIN"/>
    <property type="match status" value="1"/>
</dbReference>
<dbReference type="PANTHER" id="PTHR33284:SF1">
    <property type="entry name" value="RIBOSOMAL PROTEIN L25_GLN-TRNA SYNTHETASE, ANTI-CODON-BINDING DOMAIN-CONTAINING PROTEIN"/>
    <property type="match status" value="1"/>
</dbReference>
<dbReference type="Pfam" id="PF01386">
    <property type="entry name" value="Ribosomal_L25p"/>
    <property type="match status" value="1"/>
</dbReference>
<dbReference type="SUPFAM" id="SSF50715">
    <property type="entry name" value="Ribosomal protein L25-like"/>
    <property type="match status" value="1"/>
</dbReference>
<feature type="chain" id="PRO_0000181474" description="Large ribosomal subunit protein bL25">
    <location>
        <begin position="1"/>
        <end position="96"/>
    </location>
</feature>
<protein>
    <recommendedName>
        <fullName evidence="1">Large ribosomal subunit protein bL25</fullName>
    </recommendedName>
    <alternativeName>
        <fullName evidence="2">50S ribosomal protein L25</fullName>
    </alternativeName>
</protein>
<proteinExistence type="inferred from homology"/>
<organism>
    <name type="scientific">Buchnera aphidicola subsp. Schizaphis graminum (strain Sg)</name>
    <dbReference type="NCBI Taxonomy" id="198804"/>
    <lineage>
        <taxon>Bacteria</taxon>
        <taxon>Pseudomonadati</taxon>
        <taxon>Pseudomonadota</taxon>
        <taxon>Gammaproteobacteria</taxon>
        <taxon>Enterobacterales</taxon>
        <taxon>Erwiniaceae</taxon>
        <taxon>Buchnera</taxon>
    </lineage>
</organism>
<name>RL25_BUCAP</name>
<accession>Q8KA03</accession>
<keyword id="KW-0687">Ribonucleoprotein</keyword>
<keyword id="KW-0689">Ribosomal protein</keyword>
<keyword id="KW-0694">RNA-binding</keyword>
<keyword id="KW-0699">rRNA-binding</keyword>
<reference key="1">
    <citation type="journal article" date="2002" name="Science">
        <title>50 million years of genomic stasis in endosymbiotic bacteria.</title>
        <authorList>
            <person name="Tamas I."/>
            <person name="Klasson L."/>
            <person name="Canbaeck B."/>
            <person name="Naeslund A.K."/>
            <person name="Eriksson A.-S."/>
            <person name="Wernegreen J.J."/>
            <person name="Sandstroem J.P."/>
            <person name="Moran N.A."/>
            <person name="Andersson S.G.E."/>
        </authorList>
    </citation>
    <scope>NUCLEOTIDE SEQUENCE [LARGE SCALE GENOMIC DNA]</scope>
    <source>
        <strain>Sg</strain>
    </source>
</reference>
<sequence>MFIVKAEIRDKKGKSFSRKLRIEDKFPGVLYGFNNTPISITMDHNLVFNLQKKEDFYKETLCLLIKEKKYTVKVHAIQRHAFKMKILHIDFIYAKI</sequence>
<evidence type="ECO:0000255" key="1">
    <source>
        <dbReference type="HAMAP-Rule" id="MF_01336"/>
    </source>
</evidence>
<evidence type="ECO:0000305" key="2"/>